<protein>
    <recommendedName>
        <fullName>VapC ribonuclease Mb1587</fullName>
        <shortName>RNase Mb1587</shortName>
        <ecNumber evidence="1">3.1.-.-</ecNumber>
    </recommendedName>
    <alternativeName>
        <fullName>Toxin Mb1587</fullName>
    </alternativeName>
</protein>
<proteinExistence type="inferred from homology"/>
<reference key="1">
    <citation type="journal article" date="2003" name="Proc. Natl. Acad. Sci. U.S.A.">
        <title>The complete genome sequence of Mycobacterium bovis.</title>
        <authorList>
            <person name="Garnier T."/>
            <person name="Eiglmeier K."/>
            <person name="Camus J.-C."/>
            <person name="Medina N."/>
            <person name="Mansoor H."/>
            <person name="Pryor M."/>
            <person name="Duthoy S."/>
            <person name="Grondin S."/>
            <person name="Lacroix C."/>
            <person name="Monsempe C."/>
            <person name="Simon S."/>
            <person name="Harris B."/>
            <person name="Atkin R."/>
            <person name="Doggett J."/>
            <person name="Mayes R."/>
            <person name="Keating L."/>
            <person name="Wheeler P.R."/>
            <person name="Parkhill J."/>
            <person name="Barrell B.G."/>
            <person name="Cole S.T."/>
            <person name="Gordon S.V."/>
            <person name="Hewinson R.G."/>
        </authorList>
    </citation>
    <scope>NUCLEOTIDE SEQUENCE [LARGE SCALE GENOMIC DNA]</scope>
    <source>
        <strain>ATCC BAA-935 / AF2122/97</strain>
    </source>
</reference>
<reference key="2">
    <citation type="journal article" date="2017" name="Genome Announc.">
        <title>Updated reference genome sequence and annotation of Mycobacterium bovis AF2122/97.</title>
        <authorList>
            <person name="Malone K.M."/>
            <person name="Farrell D."/>
            <person name="Stuber T.P."/>
            <person name="Schubert O.T."/>
            <person name="Aebersold R."/>
            <person name="Robbe-Austerman S."/>
            <person name="Gordon S.V."/>
        </authorList>
    </citation>
    <scope>NUCLEOTIDE SEQUENCE [LARGE SCALE GENOMIC DNA]</scope>
    <scope>GENOME REANNOTATION</scope>
    <source>
        <strain>ATCC BAA-935 / AF2122/97</strain>
    </source>
</reference>
<evidence type="ECO:0000255" key="1">
    <source>
        <dbReference type="HAMAP-Rule" id="MF_00265"/>
    </source>
</evidence>
<accession>P64880</accession>
<accession>A0A1R3XYP1</accession>
<accession>Q10770</accession>
<accession>X2BIQ3</accession>
<dbReference type="EC" id="3.1.-.-" evidence="1"/>
<dbReference type="EMBL" id="LT708304">
    <property type="protein sequence ID" value="SIU00190.1"/>
    <property type="molecule type" value="Genomic_DNA"/>
</dbReference>
<dbReference type="RefSeq" id="NP_855239.1">
    <property type="nucleotide sequence ID" value="NC_002945.3"/>
</dbReference>
<dbReference type="SMR" id="P64880"/>
<dbReference type="KEGG" id="mbo:BQ2027_MB1587"/>
<dbReference type="PATRIC" id="fig|233413.5.peg.1734"/>
<dbReference type="Proteomes" id="UP000001419">
    <property type="component" value="Chromosome"/>
</dbReference>
<dbReference type="GO" id="GO:0000287">
    <property type="term" value="F:magnesium ion binding"/>
    <property type="evidence" value="ECO:0007669"/>
    <property type="project" value="UniProtKB-UniRule"/>
</dbReference>
<dbReference type="GO" id="GO:0004540">
    <property type="term" value="F:RNA nuclease activity"/>
    <property type="evidence" value="ECO:0007669"/>
    <property type="project" value="InterPro"/>
</dbReference>
<dbReference type="CDD" id="cd18756">
    <property type="entry name" value="PIN_MtVapC15-VapC11-like"/>
    <property type="match status" value="1"/>
</dbReference>
<dbReference type="Gene3D" id="3.40.50.1010">
    <property type="entry name" value="5'-nuclease"/>
    <property type="match status" value="1"/>
</dbReference>
<dbReference type="HAMAP" id="MF_00265">
    <property type="entry name" value="VapC_Nob1"/>
    <property type="match status" value="1"/>
</dbReference>
<dbReference type="InterPro" id="IPR029060">
    <property type="entry name" value="PIN-like_dom_sf"/>
</dbReference>
<dbReference type="InterPro" id="IPR002716">
    <property type="entry name" value="PIN_dom"/>
</dbReference>
<dbReference type="InterPro" id="IPR051749">
    <property type="entry name" value="PINc/VapC_TA_RNase"/>
</dbReference>
<dbReference type="InterPro" id="IPR022907">
    <property type="entry name" value="VapC_family"/>
</dbReference>
<dbReference type="PANTHER" id="PTHR42740">
    <property type="entry name" value="RIBONUCLEASE VAPC3"/>
    <property type="match status" value="1"/>
</dbReference>
<dbReference type="PANTHER" id="PTHR42740:SF1">
    <property type="entry name" value="RIBONUCLEASE VAPC3"/>
    <property type="match status" value="1"/>
</dbReference>
<dbReference type="Pfam" id="PF01850">
    <property type="entry name" value="PIN"/>
    <property type="match status" value="1"/>
</dbReference>
<dbReference type="SUPFAM" id="SSF88723">
    <property type="entry name" value="PIN domain-like"/>
    <property type="match status" value="1"/>
</dbReference>
<sequence>MILIDTSAWVEYFRATGSIAAVEVRRLLSEEAARIAMCEPIAMEILSGALDDNTHTTLERLVNGLPSLNVDDAIDFRAAAGIYRAARRAGETVRSINDCLIAALAIRHGARIVHRDADFDVIARITNLQAASFR</sequence>
<gene>
    <name type="ordered locus">BQ2027_MB1587</name>
</gene>
<name>VAPC4_MYCBO</name>
<feature type="chain" id="PRO_0000103884" description="VapC ribonuclease Mb1587">
    <location>
        <begin position="1"/>
        <end position="134"/>
    </location>
</feature>
<feature type="domain" description="PINc" evidence="1">
    <location>
        <begin position="2"/>
        <end position="126"/>
    </location>
</feature>
<feature type="binding site" evidence="1">
    <location>
        <position position="5"/>
    </location>
    <ligand>
        <name>Mg(2+)</name>
        <dbReference type="ChEBI" id="CHEBI:18420"/>
    </ligand>
</feature>
<feature type="binding site" evidence="1">
    <location>
        <position position="98"/>
    </location>
    <ligand>
        <name>Mg(2+)</name>
        <dbReference type="ChEBI" id="CHEBI:18420"/>
    </ligand>
</feature>
<organism>
    <name type="scientific">Mycobacterium bovis (strain ATCC BAA-935 / AF2122/97)</name>
    <dbReference type="NCBI Taxonomy" id="233413"/>
    <lineage>
        <taxon>Bacteria</taxon>
        <taxon>Bacillati</taxon>
        <taxon>Actinomycetota</taxon>
        <taxon>Actinomycetes</taxon>
        <taxon>Mycobacteriales</taxon>
        <taxon>Mycobacteriaceae</taxon>
        <taxon>Mycobacterium</taxon>
        <taxon>Mycobacterium tuberculosis complex</taxon>
    </lineage>
</organism>
<keyword id="KW-0378">Hydrolase</keyword>
<keyword id="KW-0460">Magnesium</keyword>
<keyword id="KW-0479">Metal-binding</keyword>
<keyword id="KW-0540">Nuclease</keyword>
<keyword id="KW-1185">Reference proteome</keyword>
<keyword id="KW-1277">Toxin-antitoxin system</keyword>
<comment type="function">
    <text evidence="1">Toxic component of a type II toxin-antitoxin (TA) system. An RNase.</text>
</comment>
<comment type="cofactor">
    <cofactor evidence="1">
        <name>Mg(2+)</name>
        <dbReference type="ChEBI" id="CHEBI:18420"/>
    </cofactor>
</comment>
<comment type="similarity">
    <text evidence="1">Belongs to the PINc/VapC protein family.</text>
</comment>